<name>RIHA_SALA4</name>
<reference key="1">
    <citation type="journal article" date="2011" name="J. Bacteriol.">
        <title>Comparative genomics of 28 Salmonella enterica isolates: evidence for CRISPR-mediated adaptive sublineage evolution.</title>
        <authorList>
            <person name="Fricke W.F."/>
            <person name="Mammel M.K."/>
            <person name="McDermott P.F."/>
            <person name="Tartera C."/>
            <person name="White D.G."/>
            <person name="Leclerc J.E."/>
            <person name="Ravel J."/>
            <person name="Cebula T.A."/>
        </authorList>
    </citation>
    <scope>NUCLEOTIDE SEQUENCE [LARGE SCALE GENOMIC DNA]</scope>
    <source>
        <strain>SL483</strain>
    </source>
</reference>
<comment type="function">
    <text evidence="1">Hydrolyzes cytidine or uridine to ribose and cytosine or uracil, respectively.</text>
</comment>
<comment type="similarity">
    <text evidence="1">Belongs to the IUNH family. RihA subfamily.</text>
</comment>
<feature type="chain" id="PRO_1000145798" description="Pyrimidine-specific ribonucleoside hydrolase RihA">
    <location>
        <begin position="1"/>
        <end position="311"/>
    </location>
</feature>
<feature type="active site" evidence="1">
    <location>
        <position position="240"/>
    </location>
</feature>
<organism>
    <name type="scientific">Salmonella agona (strain SL483)</name>
    <dbReference type="NCBI Taxonomy" id="454166"/>
    <lineage>
        <taxon>Bacteria</taxon>
        <taxon>Pseudomonadati</taxon>
        <taxon>Pseudomonadota</taxon>
        <taxon>Gammaproteobacteria</taxon>
        <taxon>Enterobacterales</taxon>
        <taxon>Enterobacteriaceae</taxon>
        <taxon>Salmonella</taxon>
    </lineage>
</organism>
<evidence type="ECO:0000255" key="1">
    <source>
        <dbReference type="HAMAP-Rule" id="MF_01431"/>
    </source>
</evidence>
<gene>
    <name evidence="1" type="primary">rihA</name>
    <name type="ordered locus">SeAg_B0704</name>
</gene>
<dbReference type="EC" id="3.2.-.-" evidence="1"/>
<dbReference type="EMBL" id="CP001138">
    <property type="protein sequence ID" value="ACH52647.1"/>
    <property type="molecule type" value="Genomic_DNA"/>
</dbReference>
<dbReference type="RefSeq" id="WP_001207426.1">
    <property type="nucleotide sequence ID" value="NC_011149.1"/>
</dbReference>
<dbReference type="SMR" id="B5EZA2"/>
<dbReference type="KEGG" id="sea:SeAg_B0704"/>
<dbReference type="HOGENOM" id="CLU_036838_2_0_6"/>
<dbReference type="Proteomes" id="UP000008819">
    <property type="component" value="Chromosome"/>
</dbReference>
<dbReference type="GO" id="GO:0005829">
    <property type="term" value="C:cytosol"/>
    <property type="evidence" value="ECO:0007669"/>
    <property type="project" value="TreeGrafter"/>
</dbReference>
<dbReference type="GO" id="GO:0008477">
    <property type="term" value="F:purine nucleosidase activity"/>
    <property type="evidence" value="ECO:0007669"/>
    <property type="project" value="TreeGrafter"/>
</dbReference>
<dbReference type="GO" id="GO:0045437">
    <property type="term" value="F:uridine nucleosidase activity"/>
    <property type="evidence" value="ECO:0007669"/>
    <property type="project" value="InterPro"/>
</dbReference>
<dbReference type="GO" id="GO:0015949">
    <property type="term" value="P:nucleobase-containing small molecule interconversion"/>
    <property type="evidence" value="ECO:0007669"/>
    <property type="project" value="InterPro"/>
</dbReference>
<dbReference type="GO" id="GO:0006152">
    <property type="term" value="P:purine nucleoside catabolic process"/>
    <property type="evidence" value="ECO:0007669"/>
    <property type="project" value="TreeGrafter"/>
</dbReference>
<dbReference type="GO" id="GO:0006206">
    <property type="term" value="P:pyrimidine nucleobase metabolic process"/>
    <property type="evidence" value="ECO:0007669"/>
    <property type="project" value="UniProtKB-UniRule"/>
</dbReference>
<dbReference type="CDD" id="cd02651">
    <property type="entry name" value="nuc_hydro_IU_UC_XIUA"/>
    <property type="match status" value="1"/>
</dbReference>
<dbReference type="FunFam" id="3.90.245.10:FF:000001">
    <property type="entry name" value="Pyrimidine-specific ribonucleoside hydrolase RihA"/>
    <property type="match status" value="1"/>
</dbReference>
<dbReference type="Gene3D" id="3.90.245.10">
    <property type="entry name" value="Ribonucleoside hydrolase-like"/>
    <property type="match status" value="1"/>
</dbReference>
<dbReference type="HAMAP" id="MF_01431">
    <property type="entry name" value="Pyrim_hydro_RihA"/>
    <property type="match status" value="1"/>
</dbReference>
<dbReference type="InterPro" id="IPR015910">
    <property type="entry name" value="I/U_nuclsd_hydro_CS"/>
</dbReference>
<dbReference type="InterPro" id="IPR001910">
    <property type="entry name" value="Inosine/uridine_hydrolase_dom"/>
</dbReference>
<dbReference type="InterPro" id="IPR023186">
    <property type="entry name" value="IUNH"/>
</dbReference>
<dbReference type="InterPro" id="IPR022975">
    <property type="entry name" value="Pyrim_hydro_RihA"/>
</dbReference>
<dbReference type="InterPro" id="IPR036452">
    <property type="entry name" value="Ribo_hydro-like"/>
</dbReference>
<dbReference type="NCBIfam" id="NF007761">
    <property type="entry name" value="PRK10443.1"/>
    <property type="match status" value="1"/>
</dbReference>
<dbReference type="PANTHER" id="PTHR12304">
    <property type="entry name" value="INOSINE-URIDINE PREFERRING NUCLEOSIDE HYDROLASE"/>
    <property type="match status" value="1"/>
</dbReference>
<dbReference type="PANTHER" id="PTHR12304:SF4">
    <property type="entry name" value="URIDINE NUCLEOSIDASE"/>
    <property type="match status" value="1"/>
</dbReference>
<dbReference type="Pfam" id="PF01156">
    <property type="entry name" value="IU_nuc_hydro"/>
    <property type="match status" value="1"/>
</dbReference>
<dbReference type="SUPFAM" id="SSF53590">
    <property type="entry name" value="Nucleoside hydrolase"/>
    <property type="match status" value="1"/>
</dbReference>
<dbReference type="PROSITE" id="PS01247">
    <property type="entry name" value="IUNH"/>
    <property type="match status" value="1"/>
</dbReference>
<keyword id="KW-0326">Glycosidase</keyword>
<keyword id="KW-0378">Hydrolase</keyword>
<sequence length="311" mass="33745">MALPIIIDCDPGHDDAIALVLALASPELEVKAITSSAGNQTPEKTLRNVLRMLTLLKRPDIPVAGGAVKPLMRELIIADNVHGESGLDGPALPEPSFAPQSGTAVELMAKTLRESSQPVTIVSTGPQTNVALLLNSHPELHAKIARIVIMGGAMGLGNWTPAAEFNIYVDPEAAEIVFQSGIPVVMAGLDVTHKAQIHAADIERFRAIGNPISTIVAELLDFFMEYHKDEKWGFVGAPLHDPCTIAWLLKPEIFTTVERWVGVETQGKYTQGMTVVDYYFLTGNKPNATVMVDVDRQGFVDLLAERLQYYA</sequence>
<proteinExistence type="inferred from homology"/>
<protein>
    <recommendedName>
        <fullName evidence="1">Pyrimidine-specific ribonucleoside hydrolase RihA</fullName>
        <ecNumber evidence="1">3.2.-.-</ecNumber>
    </recommendedName>
    <alternativeName>
        <fullName evidence="1">Cytidine/uridine-specific hydrolase</fullName>
    </alternativeName>
</protein>
<accession>B5EZA2</accession>